<gene>
    <name evidence="1" type="primary">rpsE</name>
    <name type="ordered locus">FTW_1741</name>
</gene>
<protein>
    <recommendedName>
        <fullName evidence="1">Small ribosomal subunit protein uS5</fullName>
    </recommendedName>
    <alternativeName>
        <fullName evidence="2">30S ribosomal protein S5</fullName>
    </alternativeName>
</protein>
<feature type="chain" id="PRO_0000323129" description="Small ribosomal subunit protein uS5">
    <location>
        <begin position="1"/>
        <end position="166"/>
    </location>
</feature>
<feature type="domain" description="S5 DRBM" evidence="1">
    <location>
        <begin position="11"/>
        <end position="74"/>
    </location>
</feature>
<sequence>MSNEVKKNEELIEKLVSVKRHSKTVKGGRIMSFAALTVVGDGKGRIGVGRGKSREVPAAIQKAMENAKKNMVSVNLNNDTLWYPVMSNHGASKVFMQPASAGTGIIAGGAMRSVFEAVGVHNVLAKTYGSTNPANVVRATIAGLAKIKSPDEIAEKRGLSVEEIQG</sequence>
<name>RS5_FRATW</name>
<organism>
    <name type="scientific">Francisella tularensis subsp. tularensis (strain WY96-3418)</name>
    <dbReference type="NCBI Taxonomy" id="418136"/>
    <lineage>
        <taxon>Bacteria</taxon>
        <taxon>Pseudomonadati</taxon>
        <taxon>Pseudomonadota</taxon>
        <taxon>Gammaproteobacteria</taxon>
        <taxon>Thiotrichales</taxon>
        <taxon>Francisellaceae</taxon>
        <taxon>Francisella</taxon>
    </lineage>
</organism>
<comment type="function">
    <text evidence="1">With S4 and S12 plays an important role in translational accuracy.</text>
</comment>
<comment type="function">
    <text evidence="1">Located at the back of the 30S subunit body where it stabilizes the conformation of the head with respect to the body.</text>
</comment>
<comment type="subunit">
    <text evidence="1">Part of the 30S ribosomal subunit. Contacts proteins S4 and S8.</text>
</comment>
<comment type="domain">
    <text>The N-terminal domain interacts with the head of the 30S subunit; the C-terminal domain interacts with the body and contacts protein S4. The interaction surface between S4 and S5 is involved in control of translational fidelity.</text>
</comment>
<comment type="similarity">
    <text evidence="1">Belongs to the universal ribosomal protein uS5 family.</text>
</comment>
<reference key="1">
    <citation type="journal article" date="2007" name="PLoS ONE">
        <title>Complete genomic characterization of a pathogenic A.II strain of Francisella tularensis subspecies tularensis.</title>
        <authorList>
            <person name="Beckstrom-Sternberg S.M."/>
            <person name="Auerbach R.K."/>
            <person name="Godbole S."/>
            <person name="Pearson J.V."/>
            <person name="Beckstrom-Sternberg J.S."/>
            <person name="Deng Z."/>
            <person name="Munk C."/>
            <person name="Kubota K."/>
            <person name="Zhou Y."/>
            <person name="Bruce D."/>
            <person name="Noronha J."/>
            <person name="Scheuermann R.H."/>
            <person name="Wang A."/>
            <person name="Wei X."/>
            <person name="Wang J."/>
            <person name="Hao J."/>
            <person name="Wagner D.M."/>
            <person name="Brettin T.S."/>
            <person name="Brown N."/>
            <person name="Gilna P."/>
            <person name="Keim P.S."/>
        </authorList>
    </citation>
    <scope>NUCLEOTIDE SEQUENCE [LARGE SCALE GENOMIC DNA]</scope>
    <source>
        <strain>WY96-3418</strain>
    </source>
</reference>
<keyword id="KW-0687">Ribonucleoprotein</keyword>
<keyword id="KW-0689">Ribosomal protein</keyword>
<keyword id="KW-0694">RNA-binding</keyword>
<keyword id="KW-0699">rRNA-binding</keyword>
<dbReference type="EMBL" id="CP000608">
    <property type="protein sequence ID" value="ABO47417.1"/>
    <property type="molecule type" value="Genomic_DNA"/>
</dbReference>
<dbReference type="RefSeq" id="WP_003021588.1">
    <property type="nucleotide sequence ID" value="NC_009257.1"/>
</dbReference>
<dbReference type="SMR" id="A4IZR7"/>
<dbReference type="GeneID" id="75264244"/>
<dbReference type="KEGG" id="ftw:FTW_1741"/>
<dbReference type="HOGENOM" id="CLU_065898_2_2_6"/>
<dbReference type="GO" id="GO:0015935">
    <property type="term" value="C:small ribosomal subunit"/>
    <property type="evidence" value="ECO:0007669"/>
    <property type="project" value="InterPro"/>
</dbReference>
<dbReference type="GO" id="GO:0019843">
    <property type="term" value="F:rRNA binding"/>
    <property type="evidence" value="ECO:0007669"/>
    <property type="project" value="UniProtKB-UniRule"/>
</dbReference>
<dbReference type="GO" id="GO:0003735">
    <property type="term" value="F:structural constituent of ribosome"/>
    <property type="evidence" value="ECO:0007669"/>
    <property type="project" value="InterPro"/>
</dbReference>
<dbReference type="GO" id="GO:0006412">
    <property type="term" value="P:translation"/>
    <property type="evidence" value="ECO:0007669"/>
    <property type="project" value="UniProtKB-UniRule"/>
</dbReference>
<dbReference type="FunFam" id="3.30.160.20:FF:000001">
    <property type="entry name" value="30S ribosomal protein S5"/>
    <property type="match status" value="1"/>
</dbReference>
<dbReference type="FunFam" id="3.30.230.10:FF:000002">
    <property type="entry name" value="30S ribosomal protein S5"/>
    <property type="match status" value="1"/>
</dbReference>
<dbReference type="Gene3D" id="3.30.160.20">
    <property type="match status" value="1"/>
</dbReference>
<dbReference type="Gene3D" id="3.30.230.10">
    <property type="match status" value="1"/>
</dbReference>
<dbReference type="HAMAP" id="MF_01307_B">
    <property type="entry name" value="Ribosomal_uS5_B"/>
    <property type="match status" value="1"/>
</dbReference>
<dbReference type="InterPro" id="IPR020568">
    <property type="entry name" value="Ribosomal_Su5_D2-typ_SF"/>
</dbReference>
<dbReference type="InterPro" id="IPR000851">
    <property type="entry name" value="Ribosomal_uS5"/>
</dbReference>
<dbReference type="InterPro" id="IPR005712">
    <property type="entry name" value="Ribosomal_uS5_bac-type"/>
</dbReference>
<dbReference type="InterPro" id="IPR005324">
    <property type="entry name" value="Ribosomal_uS5_C"/>
</dbReference>
<dbReference type="InterPro" id="IPR013810">
    <property type="entry name" value="Ribosomal_uS5_N"/>
</dbReference>
<dbReference type="InterPro" id="IPR018192">
    <property type="entry name" value="Ribosomal_uS5_N_CS"/>
</dbReference>
<dbReference type="InterPro" id="IPR014721">
    <property type="entry name" value="Ribsml_uS5_D2-typ_fold_subgr"/>
</dbReference>
<dbReference type="NCBIfam" id="TIGR01021">
    <property type="entry name" value="rpsE_bact"/>
    <property type="match status" value="1"/>
</dbReference>
<dbReference type="PANTHER" id="PTHR48277">
    <property type="entry name" value="MITOCHONDRIAL RIBOSOMAL PROTEIN S5"/>
    <property type="match status" value="1"/>
</dbReference>
<dbReference type="PANTHER" id="PTHR48277:SF1">
    <property type="entry name" value="MITOCHONDRIAL RIBOSOMAL PROTEIN S5"/>
    <property type="match status" value="1"/>
</dbReference>
<dbReference type="Pfam" id="PF00333">
    <property type="entry name" value="Ribosomal_S5"/>
    <property type="match status" value="1"/>
</dbReference>
<dbReference type="Pfam" id="PF03719">
    <property type="entry name" value="Ribosomal_S5_C"/>
    <property type="match status" value="1"/>
</dbReference>
<dbReference type="SUPFAM" id="SSF54768">
    <property type="entry name" value="dsRNA-binding domain-like"/>
    <property type="match status" value="1"/>
</dbReference>
<dbReference type="SUPFAM" id="SSF54211">
    <property type="entry name" value="Ribosomal protein S5 domain 2-like"/>
    <property type="match status" value="1"/>
</dbReference>
<dbReference type="PROSITE" id="PS00585">
    <property type="entry name" value="RIBOSOMAL_S5"/>
    <property type="match status" value="1"/>
</dbReference>
<dbReference type="PROSITE" id="PS50881">
    <property type="entry name" value="S5_DSRBD"/>
    <property type="match status" value="1"/>
</dbReference>
<evidence type="ECO:0000255" key="1">
    <source>
        <dbReference type="HAMAP-Rule" id="MF_01307"/>
    </source>
</evidence>
<evidence type="ECO:0000305" key="2"/>
<proteinExistence type="inferred from homology"/>
<accession>A4IZR7</accession>